<evidence type="ECO:0000255" key="1">
    <source>
        <dbReference type="HAMAP-Rule" id="MF_01722"/>
    </source>
</evidence>
<organism>
    <name type="scientific">Shigella flexneri serotype 5b (strain 8401)</name>
    <dbReference type="NCBI Taxonomy" id="373384"/>
    <lineage>
        <taxon>Bacteria</taxon>
        <taxon>Pseudomonadati</taxon>
        <taxon>Pseudomonadota</taxon>
        <taxon>Gammaproteobacteria</taxon>
        <taxon>Enterobacterales</taxon>
        <taxon>Enterobacteriaceae</taxon>
        <taxon>Shigella</taxon>
    </lineage>
</organism>
<protein>
    <recommendedName>
        <fullName evidence="1">Xylose import ATP-binding protein XylG</fullName>
        <ecNumber evidence="1">7.5.2.10</ecNumber>
    </recommendedName>
</protein>
<gene>
    <name evidence="1" type="primary">xylG</name>
    <name type="ordered locus">SFV_3973</name>
</gene>
<accession>Q0SY86</accession>
<reference key="1">
    <citation type="journal article" date="2006" name="BMC Genomics">
        <title>Complete genome sequence of Shigella flexneri 5b and comparison with Shigella flexneri 2a.</title>
        <authorList>
            <person name="Nie H."/>
            <person name="Yang F."/>
            <person name="Zhang X."/>
            <person name="Yang J."/>
            <person name="Chen L."/>
            <person name="Wang J."/>
            <person name="Xiong Z."/>
            <person name="Peng J."/>
            <person name="Sun L."/>
            <person name="Dong J."/>
            <person name="Xue Y."/>
            <person name="Xu X."/>
            <person name="Chen S."/>
            <person name="Yao Z."/>
            <person name="Shen Y."/>
            <person name="Jin Q."/>
        </authorList>
    </citation>
    <scope>NUCLEOTIDE SEQUENCE [LARGE SCALE GENOMIC DNA]</scope>
    <source>
        <strain>8401</strain>
    </source>
</reference>
<sequence length="513" mass="56514">MPYLLEMKNITKTFGSVKAIDNVSLRLNAGEIVSLCGENGSGKSTLMKVLCGIYPHGSYEGEIIFAGEEIQASHIRDTERKGIAIIHQELALVKELTVLENIFLGNEITHNGIMDYDLMTLRYQKLLAQVSLSISPDTRVGDLGLGQQQLVEIAKALNKQVRLLILDEPTASLTEQETSVLLDIIRDLQQHGIACIYISHKLNEVKAISDTICVIRDGQHIGTRDAAGMSEDDIITMMVGRELTALYPNEPHTTGDEILRIEHLTAWHPVNRHIKRVNDISFSLKRGEILGIAGLVGAGRTETIQCLFGVWPGQWEGKIYIDGKQVDIRNCQQAIAQGIAMVPEDRKRDGIVPVMAVGKNITLAALNKFTGGISQLDDAAEQKCILESIQQLKVKTSSPDLAIGRLSGGNQQKAILARCLLLNPRILILDEPTRGIDIGAKYEIYKLINQLVQQGIAVIVISSELPEVLGLSDRVLVMHEGKLKANLINHNLTQEQVMEAALRSEHHVEKQSV</sequence>
<comment type="function">
    <text evidence="1">Part of the ABC transporter complex XylFGH involved in xylose import. Responsible for energy coupling to the transport system.</text>
</comment>
<comment type="catalytic activity">
    <reaction evidence="1">
        <text>D-xylose(out) + ATP + H2O = D-xylose(in) + ADP + phosphate + H(+)</text>
        <dbReference type="Rhea" id="RHEA:29899"/>
        <dbReference type="ChEBI" id="CHEBI:15377"/>
        <dbReference type="ChEBI" id="CHEBI:15378"/>
        <dbReference type="ChEBI" id="CHEBI:30616"/>
        <dbReference type="ChEBI" id="CHEBI:43474"/>
        <dbReference type="ChEBI" id="CHEBI:53455"/>
        <dbReference type="ChEBI" id="CHEBI:456216"/>
        <dbReference type="EC" id="7.5.2.10"/>
    </reaction>
</comment>
<comment type="subunit">
    <text evidence="1">The complex is composed of two ATP-binding proteins (XylG), two transmembrane proteins (XylH) and a solute-binding protein (XylF).</text>
</comment>
<comment type="subcellular location">
    <subcellularLocation>
        <location evidence="1">Cell inner membrane</location>
        <topology evidence="1">Peripheral membrane protein</topology>
    </subcellularLocation>
</comment>
<comment type="similarity">
    <text evidence="1">Belongs to the ABC transporter superfamily. Xylose importer (TC 3.A.1.2.4) family.</text>
</comment>
<keyword id="KW-0067">ATP-binding</keyword>
<keyword id="KW-0997">Cell inner membrane</keyword>
<keyword id="KW-1003">Cell membrane</keyword>
<keyword id="KW-0472">Membrane</keyword>
<keyword id="KW-0547">Nucleotide-binding</keyword>
<keyword id="KW-0677">Repeat</keyword>
<keyword id="KW-0762">Sugar transport</keyword>
<keyword id="KW-1278">Translocase</keyword>
<keyword id="KW-0813">Transport</keyword>
<feature type="chain" id="PRO_0000271516" description="Xylose import ATP-binding protein XylG">
    <location>
        <begin position="1"/>
        <end position="513"/>
    </location>
</feature>
<feature type="domain" description="ABC transporter 1" evidence="1">
    <location>
        <begin position="5"/>
        <end position="242"/>
    </location>
</feature>
<feature type="domain" description="ABC transporter 2" evidence="1">
    <location>
        <begin position="259"/>
        <end position="505"/>
    </location>
</feature>
<feature type="binding site" evidence="1">
    <location>
        <begin position="37"/>
        <end position="44"/>
    </location>
    <ligand>
        <name>ATP</name>
        <dbReference type="ChEBI" id="CHEBI:30616"/>
    </ligand>
</feature>
<proteinExistence type="inferred from homology"/>
<name>XYLG_SHIF8</name>
<dbReference type="EC" id="7.5.2.10" evidence="1"/>
<dbReference type="EMBL" id="CP000266">
    <property type="protein sequence ID" value="ABF05979.1"/>
    <property type="molecule type" value="Genomic_DNA"/>
</dbReference>
<dbReference type="RefSeq" id="WP_001146518.1">
    <property type="nucleotide sequence ID" value="NC_008258.1"/>
</dbReference>
<dbReference type="SMR" id="Q0SY86"/>
<dbReference type="KEGG" id="sfv:SFV_3973"/>
<dbReference type="HOGENOM" id="CLU_000604_92_3_6"/>
<dbReference type="Proteomes" id="UP000000659">
    <property type="component" value="Chromosome"/>
</dbReference>
<dbReference type="GO" id="GO:0005886">
    <property type="term" value="C:plasma membrane"/>
    <property type="evidence" value="ECO:0007669"/>
    <property type="project" value="UniProtKB-SubCell"/>
</dbReference>
<dbReference type="GO" id="GO:0015614">
    <property type="term" value="F:ABC-type D-xylose transporter activity"/>
    <property type="evidence" value="ECO:0007669"/>
    <property type="project" value="UniProtKB-EC"/>
</dbReference>
<dbReference type="GO" id="GO:0005524">
    <property type="term" value="F:ATP binding"/>
    <property type="evidence" value="ECO:0007669"/>
    <property type="project" value="UniProtKB-KW"/>
</dbReference>
<dbReference type="GO" id="GO:0016887">
    <property type="term" value="F:ATP hydrolysis activity"/>
    <property type="evidence" value="ECO:0007669"/>
    <property type="project" value="InterPro"/>
</dbReference>
<dbReference type="CDD" id="cd03216">
    <property type="entry name" value="ABC_Carb_Monos_I"/>
    <property type="match status" value="1"/>
</dbReference>
<dbReference type="CDD" id="cd03215">
    <property type="entry name" value="ABC_Carb_Monos_II"/>
    <property type="match status" value="1"/>
</dbReference>
<dbReference type="FunFam" id="3.40.50.300:FF:000126">
    <property type="entry name" value="Galactose/methyl galactoside import ATP-binding protein MglA"/>
    <property type="match status" value="1"/>
</dbReference>
<dbReference type="FunFam" id="3.40.50.300:FF:000127">
    <property type="entry name" value="Ribose import ATP-binding protein RbsA"/>
    <property type="match status" value="1"/>
</dbReference>
<dbReference type="Gene3D" id="3.40.50.300">
    <property type="entry name" value="P-loop containing nucleotide triphosphate hydrolases"/>
    <property type="match status" value="2"/>
</dbReference>
<dbReference type="InterPro" id="IPR003593">
    <property type="entry name" value="AAA+_ATPase"/>
</dbReference>
<dbReference type="InterPro" id="IPR050107">
    <property type="entry name" value="ABC_carbohydrate_import_ATPase"/>
</dbReference>
<dbReference type="InterPro" id="IPR003439">
    <property type="entry name" value="ABC_transporter-like_ATP-bd"/>
</dbReference>
<dbReference type="InterPro" id="IPR017871">
    <property type="entry name" value="ABC_transporter-like_CS"/>
</dbReference>
<dbReference type="InterPro" id="IPR013455">
    <property type="entry name" value="ABC_transptr_XylG"/>
</dbReference>
<dbReference type="InterPro" id="IPR027417">
    <property type="entry name" value="P-loop_NTPase"/>
</dbReference>
<dbReference type="NCBIfam" id="NF010069">
    <property type="entry name" value="PRK13549.1"/>
    <property type="match status" value="1"/>
</dbReference>
<dbReference type="NCBIfam" id="TIGR02633">
    <property type="entry name" value="xylG"/>
    <property type="match status" value="1"/>
</dbReference>
<dbReference type="PANTHER" id="PTHR43790">
    <property type="entry name" value="CARBOHYDRATE TRANSPORT ATP-BINDING PROTEIN MG119-RELATED"/>
    <property type="match status" value="1"/>
</dbReference>
<dbReference type="PANTHER" id="PTHR43790:SF1">
    <property type="entry name" value="XYLOSE IMPORT ATP-BINDING PROTEIN XYLG"/>
    <property type="match status" value="1"/>
</dbReference>
<dbReference type="Pfam" id="PF00005">
    <property type="entry name" value="ABC_tran"/>
    <property type="match status" value="2"/>
</dbReference>
<dbReference type="SMART" id="SM00382">
    <property type="entry name" value="AAA"/>
    <property type="match status" value="2"/>
</dbReference>
<dbReference type="SUPFAM" id="SSF52540">
    <property type="entry name" value="P-loop containing nucleoside triphosphate hydrolases"/>
    <property type="match status" value="2"/>
</dbReference>
<dbReference type="PROSITE" id="PS00211">
    <property type="entry name" value="ABC_TRANSPORTER_1"/>
    <property type="match status" value="1"/>
</dbReference>
<dbReference type="PROSITE" id="PS50893">
    <property type="entry name" value="ABC_TRANSPORTER_2"/>
    <property type="match status" value="2"/>
</dbReference>
<dbReference type="PROSITE" id="PS51280">
    <property type="entry name" value="XYLG"/>
    <property type="match status" value="1"/>
</dbReference>